<gene>
    <name evidence="1" type="primary">atpE</name>
    <name type="ordered locus">HD_0005</name>
</gene>
<sequence length="84" mass="8715">MESVITATIIGASLLLAFAALGTAIGFAILGGKFLESSSRQPELASSLQTKMFIVAGLLDAIAMIAVGISLLFIFANPFIDLLK</sequence>
<accession>Q7VPP5</accession>
<organism>
    <name type="scientific">Haemophilus ducreyi (strain 35000HP / ATCC 700724)</name>
    <dbReference type="NCBI Taxonomy" id="233412"/>
    <lineage>
        <taxon>Bacteria</taxon>
        <taxon>Pseudomonadati</taxon>
        <taxon>Pseudomonadota</taxon>
        <taxon>Gammaproteobacteria</taxon>
        <taxon>Pasteurellales</taxon>
        <taxon>Pasteurellaceae</taxon>
        <taxon>Haemophilus</taxon>
    </lineage>
</organism>
<reference key="1">
    <citation type="submission" date="2003-06" db="EMBL/GenBank/DDBJ databases">
        <title>The complete genome sequence of Haemophilus ducreyi.</title>
        <authorList>
            <person name="Munson R.S. Jr."/>
            <person name="Ray W.C."/>
            <person name="Mahairas G."/>
            <person name="Sabo P."/>
            <person name="Mungur R."/>
            <person name="Johnson L."/>
            <person name="Nguyen D."/>
            <person name="Wang J."/>
            <person name="Forst C."/>
            <person name="Hood L."/>
        </authorList>
    </citation>
    <scope>NUCLEOTIDE SEQUENCE [LARGE SCALE GENOMIC DNA]</scope>
    <source>
        <strain>35000HP / ATCC 700724</strain>
    </source>
</reference>
<protein>
    <recommendedName>
        <fullName evidence="1">ATP synthase subunit c</fullName>
    </recommendedName>
    <alternativeName>
        <fullName evidence="1">ATP synthase F(0) sector subunit c</fullName>
    </alternativeName>
    <alternativeName>
        <fullName evidence="1">F-type ATPase subunit c</fullName>
        <shortName evidence="1">F-ATPase subunit c</shortName>
    </alternativeName>
    <alternativeName>
        <fullName evidence="1">Lipid-binding protein</fullName>
    </alternativeName>
</protein>
<dbReference type="EMBL" id="AE017143">
    <property type="protein sequence ID" value="AAP95029.1"/>
    <property type="molecule type" value="Genomic_DNA"/>
</dbReference>
<dbReference type="RefSeq" id="WP_010944083.1">
    <property type="nucleotide sequence ID" value="NC_002940.2"/>
</dbReference>
<dbReference type="SMR" id="Q7VPP5"/>
<dbReference type="STRING" id="233412.HD_0005"/>
<dbReference type="GeneID" id="60733495"/>
<dbReference type="KEGG" id="hdu:HD_0005"/>
<dbReference type="eggNOG" id="ENOG5032S3K">
    <property type="taxonomic scope" value="Bacteria"/>
</dbReference>
<dbReference type="HOGENOM" id="CLU_148047_1_0_6"/>
<dbReference type="OrthoDB" id="9811659at2"/>
<dbReference type="Proteomes" id="UP000001022">
    <property type="component" value="Chromosome"/>
</dbReference>
<dbReference type="GO" id="GO:0005886">
    <property type="term" value="C:plasma membrane"/>
    <property type="evidence" value="ECO:0007669"/>
    <property type="project" value="UniProtKB-SubCell"/>
</dbReference>
<dbReference type="GO" id="GO:0045259">
    <property type="term" value="C:proton-transporting ATP synthase complex"/>
    <property type="evidence" value="ECO:0007669"/>
    <property type="project" value="UniProtKB-KW"/>
</dbReference>
<dbReference type="GO" id="GO:0033177">
    <property type="term" value="C:proton-transporting two-sector ATPase complex, proton-transporting domain"/>
    <property type="evidence" value="ECO:0007669"/>
    <property type="project" value="InterPro"/>
</dbReference>
<dbReference type="GO" id="GO:0008289">
    <property type="term" value="F:lipid binding"/>
    <property type="evidence" value="ECO:0007669"/>
    <property type="project" value="UniProtKB-KW"/>
</dbReference>
<dbReference type="GO" id="GO:0046933">
    <property type="term" value="F:proton-transporting ATP synthase activity, rotational mechanism"/>
    <property type="evidence" value="ECO:0007669"/>
    <property type="project" value="UniProtKB-UniRule"/>
</dbReference>
<dbReference type="CDD" id="cd18185">
    <property type="entry name" value="ATP-synt_Fo_c_ATPE"/>
    <property type="match status" value="1"/>
</dbReference>
<dbReference type="FunFam" id="1.20.20.10:FF:000002">
    <property type="entry name" value="ATP synthase subunit c"/>
    <property type="match status" value="1"/>
</dbReference>
<dbReference type="Gene3D" id="1.20.20.10">
    <property type="entry name" value="F1F0 ATP synthase subunit C"/>
    <property type="match status" value="1"/>
</dbReference>
<dbReference type="HAMAP" id="MF_01396">
    <property type="entry name" value="ATP_synth_c_bact"/>
    <property type="match status" value="1"/>
</dbReference>
<dbReference type="InterPro" id="IPR005953">
    <property type="entry name" value="ATP_synth_csu_bac/chlpt"/>
</dbReference>
<dbReference type="InterPro" id="IPR000454">
    <property type="entry name" value="ATP_synth_F0_csu"/>
</dbReference>
<dbReference type="InterPro" id="IPR020537">
    <property type="entry name" value="ATP_synth_F0_csu_DDCD_BS"/>
</dbReference>
<dbReference type="InterPro" id="IPR038662">
    <property type="entry name" value="ATP_synth_F0_csu_sf"/>
</dbReference>
<dbReference type="InterPro" id="IPR002379">
    <property type="entry name" value="ATPase_proteolipid_c-like_dom"/>
</dbReference>
<dbReference type="InterPro" id="IPR035921">
    <property type="entry name" value="F/V-ATP_Csub_sf"/>
</dbReference>
<dbReference type="NCBIfam" id="TIGR01260">
    <property type="entry name" value="ATP_synt_c"/>
    <property type="match status" value="1"/>
</dbReference>
<dbReference type="NCBIfam" id="NF005363">
    <property type="entry name" value="PRK06876.1"/>
    <property type="match status" value="1"/>
</dbReference>
<dbReference type="Pfam" id="PF00137">
    <property type="entry name" value="ATP-synt_C"/>
    <property type="match status" value="1"/>
</dbReference>
<dbReference type="PRINTS" id="PR00124">
    <property type="entry name" value="ATPASEC"/>
</dbReference>
<dbReference type="SUPFAM" id="SSF81333">
    <property type="entry name" value="F1F0 ATP synthase subunit C"/>
    <property type="match status" value="1"/>
</dbReference>
<dbReference type="PROSITE" id="PS00605">
    <property type="entry name" value="ATPASE_C"/>
    <property type="match status" value="1"/>
</dbReference>
<comment type="function">
    <text evidence="1">F(1)F(0) ATP synthase produces ATP from ADP in the presence of a proton or sodium gradient. F-type ATPases consist of two structural domains, F(1) containing the extramembraneous catalytic core and F(0) containing the membrane proton channel, linked together by a central stalk and a peripheral stalk. During catalysis, ATP synthesis in the catalytic domain of F(1) is coupled via a rotary mechanism of the central stalk subunits to proton translocation.</text>
</comment>
<comment type="function">
    <text evidence="1">Key component of the F(0) channel; it plays a direct role in translocation across the membrane. A homomeric c-ring of between 10-14 subunits forms the central stalk rotor element with the F(1) delta and epsilon subunits.</text>
</comment>
<comment type="subunit">
    <text evidence="1">F-type ATPases have 2 components, F(1) - the catalytic core - and F(0) - the membrane proton channel. F(1) has five subunits: alpha(3), beta(3), gamma(1), delta(1), epsilon(1). F(0) has three main subunits: a(1), b(2) and c(10-14). The alpha and beta chains form an alternating ring which encloses part of the gamma chain. F(1) is attached to F(0) by a central stalk formed by the gamma and epsilon chains, while a peripheral stalk is formed by the delta and b chains.</text>
</comment>
<comment type="subcellular location">
    <subcellularLocation>
        <location evidence="1">Cell inner membrane</location>
        <topology evidence="1">Multi-pass membrane protein</topology>
    </subcellularLocation>
</comment>
<comment type="similarity">
    <text evidence="1">Belongs to the ATPase C chain family.</text>
</comment>
<keyword id="KW-0066">ATP synthesis</keyword>
<keyword id="KW-0997">Cell inner membrane</keyword>
<keyword id="KW-1003">Cell membrane</keyword>
<keyword id="KW-0138">CF(0)</keyword>
<keyword id="KW-0375">Hydrogen ion transport</keyword>
<keyword id="KW-0406">Ion transport</keyword>
<keyword id="KW-0446">Lipid-binding</keyword>
<keyword id="KW-0472">Membrane</keyword>
<keyword id="KW-1185">Reference proteome</keyword>
<keyword id="KW-0812">Transmembrane</keyword>
<keyword id="KW-1133">Transmembrane helix</keyword>
<keyword id="KW-0813">Transport</keyword>
<proteinExistence type="inferred from homology"/>
<feature type="chain" id="PRO_1000184384" description="ATP synthase subunit c">
    <location>
        <begin position="1"/>
        <end position="84"/>
    </location>
</feature>
<feature type="transmembrane region" description="Helical" evidence="1">
    <location>
        <begin position="9"/>
        <end position="29"/>
    </location>
</feature>
<feature type="transmembrane region" description="Helical" evidence="1">
    <location>
        <begin position="54"/>
        <end position="74"/>
    </location>
</feature>
<feature type="site" description="Reversibly protonated during proton transport" evidence="1">
    <location>
        <position position="60"/>
    </location>
</feature>
<name>ATPL_HAEDU</name>
<evidence type="ECO:0000255" key="1">
    <source>
        <dbReference type="HAMAP-Rule" id="MF_01396"/>
    </source>
</evidence>